<keyword id="KW-0325">Glycoprotein</keyword>
<keyword id="KW-0349">Heme</keyword>
<keyword id="KW-0408">Iron</keyword>
<keyword id="KW-0472">Membrane</keyword>
<keyword id="KW-0479">Metal-binding</keyword>
<keyword id="KW-0503">Monooxygenase</keyword>
<keyword id="KW-0560">Oxidoreductase</keyword>
<keyword id="KW-0812">Transmembrane</keyword>
<keyword id="KW-1133">Transmembrane helix</keyword>
<proteinExistence type="inferred from homology"/>
<dbReference type="EC" id="1.-.-.-" evidence="4"/>
<dbReference type="EMBL" id="LC155210">
    <property type="protein sequence ID" value="BAX76656.1"/>
    <property type="molecule type" value="Genomic_DNA"/>
</dbReference>
<dbReference type="GlyCosmos" id="A0A1Y1C7S2">
    <property type="glycosylation" value="1 site, No reported glycans"/>
</dbReference>
<dbReference type="UniPathway" id="UPA00213"/>
<dbReference type="GO" id="GO:0016020">
    <property type="term" value="C:membrane"/>
    <property type="evidence" value="ECO:0007669"/>
    <property type="project" value="UniProtKB-SubCell"/>
</dbReference>
<dbReference type="GO" id="GO:0020037">
    <property type="term" value="F:heme binding"/>
    <property type="evidence" value="ECO:0007669"/>
    <property type="project" value="InterPro"/>
</dbReference>
<dbReference type="GO" id="GO:0005506">
    <property type="term" value="F:iron ion binding"/>
    <property type="evidence" value="ECO:0007669"/>
    <property type="project" value="InterPro"/>
</dbReference>
<dbReference type="GO" id="GO:0004497">
    <property type="term" value="F:monooxygenase activity"/>
    <property type="evidence" value="ECO:0007669"/>
    <property type="project" value="UniProtKB-KW"/>
</dbReference>
<dbReference type="GO" id="GO:0016705">
    <property type="term" value="F:oxidoreductase activity, acting on paired donors, with incorporation or reduction of molecular oxygen"/>
    <property type="evidence" value="ECO:0007669"/>
    <property type="project" value="InterPro"/>
</dbReference>
<dbReference type="GO" id="GO:0044550">
    <property type="term" value="P:secondary metabolite biosynthetic process"/>
    <property type="evidence" value="ECO:0007669"/>
    <property type="project" value="UniProtKB-ARBA"/>
</dbReference>
<dbReference type="GO" id="GO:0016114">
    <property type="term" value="P:terpenoid biosynthetic process"/>
    <property type="evidence" value="ECO:0007669"/>
    <property type="project" value="UniProtKB-UniPathway"/>
</dbReference>
<dbReference type="Gene3D" id="1.10.630.10">
    <property type="entry name" value="Cytochrome P450"/>
    <property type="match status" value="1"/>
</dbReference>
<dbReference type="InterPro" id="IPR001128">
    <property type="entry name" value="Cyt_P450"/>
</dbReference>
<dbReference type="InterPro" id="IPR036396">
    <property type="entry name" value="Cyt_P450_sf"/>
</dbReference>
<dbReference type="InterPro" id="IPR050121">
    <property type="entry name" value="Cytochrome_P450_monoxygenase"/>
</dbReference>
<dbReference type="PANTHER" id="PTHR24305">
    <property type="entry name" value="CYTOCHROME P450"/>
    <property type="match status" value="1"/>
</dbReference>
<dbReference type="PANTHER" id="PTHR24305:SF85">
    <property type="entry name" value="P450, PUTATIVE (EUROFUNG)-RELATED"/>
    <property type="match status" value="1"/>
</dbReference>
<dbReference type="Pfam" id="PF00067">
    <property type="entry name" value="p450"/>
    <property type="match status" value="1"/>
</dbReference>
<dbReference type="SUPFAM" id="SSF48264">
    <property type="entry name" value="Cytochrome P450"/>
    <property type="match status" value="1"/>
</dbReference>
<accession>A0A1Y1C7S2</accession>
<gene>
    <name evidence="5" type="primary">Qnn-P450</name>
</gene>
<comment type="function">
    <text evidence="4">Cytochrome P450 monooxygenase; part of the gene cluster that mediates the biosynthesis of the pentacyclic sesterterpene quiannulatic acid (PubMed:27447198). The first step of the pathway is performed by the sesterterpene synthase (QS) that possesses both prenyl transferase and terpene cyclase activity, converting isopentenyl diphosphate and dimethylallyl diphosphate into geranylfarnesyl diphosphate (GFPP) and further converting GFPP into quiannulatene via an unprecedented cyclization mode which involves three rounds of hydride shifts and two successive C-C bond migrations to construct the 5-6-5-5-5 fused ring (PubMed:27447198). The cytochrome P450 monooxygenase Qnn-P450 then oxidizes quiannulatene at C-19 in 3 successive reactions to afford quiannulatic acid (PubMed:27447198).</text>
</comment>
<comment type="catalytic activity">
    <reaction evidence="4">
        <text>quiannulatene + 3 reduced [NADPH--hemoprotein reductase] + 3 O2 = quiannulatate + 3 oxidized [NADPH--hemoprotein reductase] + 4 H2O + 4 H(+)</text>
        <dbReference type="Rhea" id="RHEA:66868"/>
        <dbReference type="Rhea" id="RHEA-COMP:11964"/>
        <dbReference type="Rhea" id="RHEA-COMP:11965"/>
        <dbReference type="ChEBI" id="CHEBI:15377"/>
        <dbReference type="ChEBI" id="CHEBI:15378"/>
        <dbReference type="ChEBI" id="CHEBI:15379"/>
        <dbReference type="ChEBI" id="CHEBI:57618"/>
        <dbReference type="ChEBI" id="CHEBI:58210"/>
        <dbReference type="ChEBI" id="CHEBI:167518"/>
        <dbReference type="ChEBI" id="CHEBI:167519"/>
    </reaction>
    <physiologicalReaction direction="left-to-right" evidence="4">
        <dbReference type="Rhea" id="RHEA:66869"/>
    </physiologicalReaction>
</comment>
<comment type="cofactor">
    <cofactor evidence="1">
        <name>heme</name>
        <dbReference type="ChEBI" id="CHEBI:30413"/>
    </cofactor>
</comment>
<comment type="pathway">
    <text evidence="4">Secondary metabolite biosynthesis; terpenoid biosynthesis.</text>
</comment>
<comment type="subcellular location">
    <subcellularLocation>
        <location evidence="2">Membrane</location>
        <topology evidence="2">Single-pass membrane protein</topology>
    </subcellularLocation>
</comment>
<comment type="similarity">
    <text evidence="6">Belongs to the cytochrome P450 family.</text>
</comment>
<organism>
    <name type="scientific">Emericella variicolor</name>
    <name type="common">Aspergillus stellatus</name>
    <dbReference type="NCBI Taxonomy" id="1549217"/>
    <lineage>
        <taxon>Eukaryota</taxon>
        <taxon>Fungi</taxon>
        <taxon>Dikarya</taxon>
        <taxon>Ascomycota</taxon>
        <taxon>Pezizomycotina</taxon>
        <taxon>Eurotiomycetes</taxon>
        <taxon>Eurotiomycetidae</taxon>
        <taxon>Eurotiales</taxon>
        <taxon>Aspergillaceae</taxon>
        <taxon>Aspergillus</taxon>
        <taxon>Aspergillus subgen. Nidulantes</taxon>
    </lineage>
</organism>
<reference key="1">
    <citation type="journal article" date="2016" name="J. Am. Chem. Soc.">
        <title>Genome-based Discovery of an unprecedented cyclization mode in fungal sesterterpenoid biosynthesis.</title>
        <authorList>
            <person name="Okada M."/>
            <person name="Matsuda Y."/>
            <person name="Mitsuhashi T."/>
            <person name="Hoshino S."/>
            <person name="Mori T."/>
            <person name="Nakagawa K."/>
            <person name="Quan Z."/>
            <person name="Qin B."/>
            <person name="Zhang H."/>
            <person name="Hayashi F."/>
            <person name="Kawaide H."/>
            <person name="Abe I."/>
        </authorList>
    </citation>
    <scope>NUCLEOTIDE SEQUENCE [GENOMIC DNA]</scope>
    <scope>FUNCTION</scope>
    <scope>PATHWAY</scope>
    <source>
        <strain>ATCC 12069 / CBS 136.55 / IMI 60316 / NBRC 32302</strain>
    </source>
</reference>
<feature type="chain" id="PRO_0000452690" description="Quiannulatic acid synthase">
    <location>
        <begin position="1"/>
        <end position="513"/>
    </location>
</feature>
<feature type="transmembrane region" description="Helical" evidence="2">
    <location>
        <begin position="14"/>
        <end position="34"/>
    </location>
</feature>
<feature type="binding site" description="axial binding residue" evidence="1">
    <location>
        <position position="477"/>
    </location>
    <ligand>
        <name>heme</name>
        <dbReference type="ChEBI" id="CHEBI:30413"/>
    </ligand>
    <ligandPart>
        <name>Fe</name>
        <dbReference type="ChEBI" id="CHEBI:18248"/>
    </ligandPart>
</feature>
<feature type="glycosylation site" description="N-linked (GlcNAc...) asparagine" evidence="3">
    <location>
        <position position="308"/>
    </location>
</feature>
<evidence type="ECO:0000250" key="1">
    <source>
        <dbReference type="UniProtKB" id="P04798"/>
    </source>
</evidence>
<evidence type="ECO:0000255" key="2"/>
<evidence type="ECO:0000255" key="3">
    <source>
        <dbReference type="PROSITE-ProRule" id="PRU00498"/>
    </source>
</evidence>
<evidence type="ECO:0000269" key="4">
    <source>
    </source>
</evidence>
<evidence type="ECO:0000303" key="5">
    <source>
    </source>
</evidence>
<evidence type="ECO:0000305" key="6"/>
<protein>
    <recommendedName>
        <fullName evidence="5">Quiannulatic acid synthase</fullName>
        <ecNumber evidence="4">1.-.-.-</ecNumber>
    </recommendedName>
    <alternativeName>
        <fullName evidence="5">Cytochrome P450 monooxygenase Qnn-P450</fullName>
    </alternativeName>
    <alternativeName>
        <fullName evidence="5">Quiannulatic acid biosynthesis cluster protein Qnn-P450</fullName>
    </alternativeName>
</protein>
<name>QNN2_EMEVA</name>
<sequence length="513" mass="58675">MDAFKGAMSKTLEVFTFCNIILALASLVVAQCVYQIIYYRFFHPLRHYPGPFWASVTRLWGAYHFIKGDKLDLEWQAIKQYGPIIRTSPTMLLVADSTLMPAIYHRRDTKARFYLSEMFETSGSLVIRDPAKHAAHRRLISATYSMSNIKRMEPLLDKHILHFLEKLDSEYAQNAKPMDFSTWAAYLSYDTVTDLGFRNPLGFVDSASDVGGLIYQFRLGMLLFATSGYLYPLFRWLTTTWLKKWLIIRPEQALGFGVIMKRANEVLEERKRALTEGRIAKAVKGDASYDFLQAFMDTRTPEGEYLDNKTIRAEVFVILGAGADGFSSLSSAFIAEVLSRPAVYGRVMAEIKAAAIAGEFSQPVPLFTEITKNLPFFLACMQEIFRLHPTGATQLPREITPNDPELVLSGHKVPVGIEVTCNPWIINRDYNIYGDGAEVFNPDRWLGDPEKIKFYEKHSLTWGHGARFLMYFEVSICEETPETPKLESEIYGPVLGWKNVWLDLHKRRSWEQQ</sequence>